<dbReference type="EMBL" id="CP000879">
    <property type="protein sequence ID" value="ABX31098.1"/>
    <property type="molecule type" value="Genomic_DNA"/>
</dbReference>
<dbReference type="RefSeq" id="WP_012208205.1">
    <property type="nucleotide sequence ID" value="NC_010003.1"/>
</dbReference>
<dbReference type="SMR" id="A9BF34"/>
<dbReference type="STRING" id="403833.Pmob_0356"/>
<dbReference type="KEGG" id="pmo:Pmob_0356"/>
<dbReference type="eggNOG" id="COG0222">
    <property type="taxonomic scope" value="Bacteria"/>
</dbReference>
<dbReference type="HOGENOM" id="CLU_086499_3_2_0"/>
<dbReference type="OrthoDB" id="9811748at2"/>
<dbReference type="Proteomes" id="UP000000789">
    <property type="component" value="Chromosome"/>
</dbReference>
<dbReference type="GO" id="GO:0022625">
    <property type="term" value="C:cytosolic large ribosomal subunit"/>
    <property type="evidence" value="ECO:0007669"/>
    <property type="project" value="TreeGrafter"/>
</dbReference>
<dbReference type="GO" id="GO:0003729">
    <property type="term" value="F:mRNA binding"/>
    <property type="evidence" value="ECO:0007669"/>
    <property type="project" value="TreeGrafter"/>
</dbReference>
<dbReference type="GO" id="GO:0003735">
    <property type="term" value="F:structural constituent of ribosome"/>
    <property type="evidence" value="ECO:0007669"/>
    <property type="project" value="InterPro"/>
</dbReference>
<dbReference type="GO" id="GO:0006412">
    <property type="term" value="P:translation"/>
    <property type="evidence" value="ECO:0007669"/>
    <property type="project" value="UniProtKB-UniRule"/>
</dbReference>
<dbReference type="CDD" id="cd00387">
    <property type="entry name" value="Ribosomal_L7_L12"/>
    <property type="match status" value="1"/>
</dbReference>
<dbReference type="FunFam" id="3.30.1390.10:FF:000001">
    <property type="entry name" value="50S ribosomal protein L7/L12"/>
    <property type="match status" value="1"/>
</dbReference>
<dbReference type="Gene3D" id="3.30.1390.10">
    <property type="match status" value="1"/>
</dbReference>
<dbReference type="Gene3D" id="1.20.5.710">
    <property type="entry name" value="Single helix bin"/>
    <property type="match status" value="1"/>
</dbReference>
<dbReference type="HAMAP" id="MF_00368">
    <property type="entry name" value="Ribosomal_bL12"/>
    <property type="match status" value="1"/>
</dbReference>
<dbReference type="InterPro" id="IPR000206">
    <property type="entry name" value="Ribosomal_bL12"/>
</dbReference>
<dbReference type="InterPro" id="IPR013823">
    <property type="entry name" value="Ribosomal_bL12_C"/>
</dbReference>
<dbReference type="InterPro" id="IPR014719">
    <property type="entry name" value="Ribosomal_bL12_C/ClpS-like"/>
</dbReference>
<dbReference type="InterPro" id="IPR008932">
    <property type="entry name" value="Ribosomal_bL12_oligo"/>
</dbReference>
<dbReference type="InterPro" id="IPR036235">
    <property type="entry name" value="Ribosomal_bL12_oligo_N_sf"/>
</dbReference>
<dbReference type="NCBIfam" id="TIGR00855">
    <property type="entry name" value="L12"/>
    <property type="match status" value="1"/>
</dbReference>
<dbReference type="PANTHER" id="PTHR45987">
    <property type="entry name" value="39S RIBOSOMAL PROTEIN L12"/>
    <property type="match status" value="1"/>
</dbReference>
<dbReference type="PANTHER" id="PTHR45987:SF4">
    <property type="entry name" value="LARGE RIBOSOMAL SUBUNIT PROTEIN BL12M"/>
    <property type="match status" value="1"/>
</dbReference>
<dbReference type="Pfam" id="PF00542">
    <property type="entry name" value="Ribosomal_L12"/>
    <property type="match status" value="1"/>
</dbReference>
<dbReference type="Pfam" id="PF16320">
    <property type="entry name" value="Ribosomal_L12_N"/>
    <property type="match status" value="1"/>
</dbReference>
<dbReference type="SUPFAM" id="SSF54736">
    <property type="entry name" value="ClpS-like"/>
    <property type="match status" value="1"/>
</dbReference>
<dbReference type="SUPFAM" id="SSF48300">
    <property type="entry name" value="Ribosomal protein L7/12, oligomerisation (N-terminal) domain"/>
    <property type="match status" value="1"/>
</dbReference>
<gene>
    <name evidence="1" type="primary">rplL</name>
    <name type="ordered locus">Pmob_0356</name>
</gene>
<comment type="function">
    <text evidence="1">Forms part of the ribosomal stalk which helps the ribosome interact with GTP-bound translation factors. Is thus essential for accurate translation.</text>
</comment>
<comment type="subunit">
    <text evidence="1">Homodimer. Part of the ribosomal stalk of the 50S ribosomal subunit. Forms a multimeric L10(L12)X complex, where L10 forms an elongated spine to which 2 to 4 L12 dimers bind in a sequential fashion. Binds GTP-bound translation factors.</text>
</comment>
<comment type="similarity">
    <text evidence="1">Belongs to the bacterial ribosomal protein bL12 family.</text>
</comment>
<sequence length="128" mass="13700">MTKEELINEIKNMTVGELAELVKALEDEFGVSAAAPVMAAVPGVAGVSPAQQEEEKTDFKVVLKGFGDKKIGVIKVVREITNLGLKEAKDLVEKAGTPDAVIKEGVPKEEAEEIKKKLEEAGAEVELK</sequence>
<proteinExistence type="inferred from homology"/>
<reference key="1">
    <citation type="submission" date="2007-11" db="EMBL/GenBank/DDBJ databases">
        <title>Complete sequence of Petroga mobilis SJ95.</title>
        <authorList>
            <consortium name="US DOE Joint Genome Institute"/>
            <person name="Copeland A."/>
            <person name="Lucas S."/>
            <person name="Lapidus A."/>
            <person name="Barry K."/>
            <person name="Glavina del Rio T."/>
            <person name="Dalin E."/>
            <person name="Tice H."/>
            <person name="Pitluck S."/>
            <person name="Meincke L."/>
            <person name="Brettin T."/>
            <person name="Bruce D."/>
            <person name="Detter J.C."/>
            <person name="Han C."/>
            <person name="Kuske C.R."/>
            <person name="Schmutz J."/>
            <person name="Larimer F."/>
            <person name="Land M."/>
            <person name="Hauser L."/>
            <person name="Kyrpides N."/>
            <person name="Mikhailova N."/>
            <person name="Noll K."/>
            <person name="Richardson P."/>
        </authorList>
    </citation>
    <scope>NUCLEOTIDE SEQUENCE [LARGE SCALE GENOMIC DNA]</scope>
    <source>
        <strain>DSM 10674 / SJ95</strain>
    </source>
</reference>
<protein>
    <recommendedName>
        <fullName evidence="1">Large ribosomal subunit protein bL12</fullName>
    </recommendedName>
    <alternativeName>
        <fullName evidence="2">50S ribosomal protein L7/L12</fullName>
    </alternativeName>
</protein>
<accession>A9BF34</accession>
<evidence type="ECO:0000255" key="1">
    <source>
        <dbReference type="HAMAP-Rule" id="MF_00368"/>
    </source>
</evidence>
<evidence type="ECO:0000305" key="2"/>
<feature type="chain" id="PRO_1000121467" description="Large ribosomal subunit protein bL12">
    <location>
        <begin position="1"/>
        <end position="128"/>
    </location>
</feature>
<name>RL7_PETMO</name>
<organism>
    <name type="scientific">Petrotoga mobilis (strain DSM 10674 / SJ95)</name>
    <dbReference type="NCBI Taxonomy" id="403833"/>
    <lineage>
        <taxon>Bacteria</taxon>
        <taxon>Thermotogati</taxon>
        <taxon>Thermotogota</taxon>
        <taxon>Thermotogae</taxon>
        <taxon>Petrotogales</taxon>
        <taxon>Petrotogaceae</taxon>
        <taxon>Petrotoga</taxon>
    </lineage>
</organism>
<keyword id="KW-0687">Ribonucleoprotein</keyword>
<keyword id="KW-0689">Ribosomal protein</keyword>